<gene>
    <name type="primary">iphP</name>
    <name type="synonym">iph</name>
</gene>
<keyword id="KW-0903">Direct protein sequencing</keyword>
<keyword id="KW-0378">Hydrolase</keyword>
<keyword id="KW-0904">Protein phosphatase</keyword>
<keyword id="KW-0732">Signal</keyword>
<proteinExistence type="evidence at protein level"/>
<accession>Q05918</accession>
<evidence type="ECO:0000255" key="1">
    <source>
        <dbReference type="PROSITE-ProRule" id="PRU10044"/>
    </source>
</evidence>
<evidence type="ECO:0000256" key="2">
    <source>
        <dbReference type="SAM" id="MobiDB-lite"/>
    </source>
</evidence>
<evidence type="ECO:0000269" key="3">
    <source>
    </source>
</evidence>
<evidence type="ECO:0000305" key="4"/>
<dbReference type="EC" id="3.1.3.48"/>
<dbReference type="EMBL" id="L11392">
    <property type="protein sequence ID" value="AAA25511.1"/>
    <property type="molecule type" value="Genomic_DNA"/>
</dbReference>
<dbReference type="PIR" id="A46635">
    <property type="entry name" value="A46635"/>
</dbReference>
<dbReference type="SMR" id="Q05918"/>
<dbReference type="GO" id="GO:0004725">
    <property type="term" value="F:protein tyrosine phosphatase activity"/>
    <property type="evidence" value="ECO:0007669"/>
    <property type="project" value="UniProtKB-EC"/>
</dbReference>
<dbReference type="CDD" id="cd14529">
    <property type="entry name" value="TpbA-like"/>
    <property type="match status" value="1"/>
</dbReference>
<dbReference type="Gene3D" id="3.90.190.10">
    <property type="entry name" value="Protein tyrosine phosphatase superfamily"/>
    <property type="match status" value="1"/>
</dbReference>
<dbReference type="InterPro" id="IPR029021">
    <property type="entry name" value="Prot-tyrosine_phosphatase-like"/>
</dbReference>
<dbReference type="InterPro" id="IPR026893">
    <property type="entry name" value="Tyr/Ser_Pase_IphP-type"/>
</dbReference>
<dbReference type="InterPro" id="IPR016130">
    <property type="entry name" value="Tyr_Pase_AS"/>
</dbReference>
<dbReference type="InterPro" id="IPR000387">
    <property type="entry name" value="Tyr_Pase_dom"/>
</dbReference>
<dbReference type="PANTHER" id="PTHR31126:SF1">
    <property type="entry name" value="TYROSINE SPECIFIC PROTEIN PHOSPHATASES DOMAIN-CONTAINING PROTEIN"/>
    <property type="match status" value="1"/>
</dbReference>
<dbReference type="PANTHER" id="PTHR31126">
    <property type="entry name" value="TYROSINE-PROTEIN PHOSPHATASE"/>
    <property type="match status" value="1"/>
</dbReference>
<dbReference type="Pfam" id="PF13350">
    <property type="entry name" value="Y_phosphatase3"/>
    <property type="match status" value="1"/>
</dbReference>
<dbReference type="SUPFAM" id="SSF52799">
    <property type="entry name" value="(Phosphotyrosine protein) phosphatases II"/>
    <property type="match status" value="1"/>
</dbReference>
<dbReference type="PROSITE" id="PS00383">
    <property type="entry name" value="TYR_PHOSPHATASE_1"/>
    <property type="match status" value="1"/>
</dbReference>
<dbReference type="PROSITE" id="PS50056">
    <property type="entry name" value="TYR_PHOSPHATASE_2"/>
    <property type="match status" value="1"/>
</dbReference>
<reference key="1">
    <citation type="journal article" date="1993" name="J. Biol. Chem.">
        <title>A protein-tyrosine/serine phosphatase encoded by the genome of the cyanobacterium Nostoc commune UTEX 584.</title>
        <authorList>
            <person name="Potts M."/>
            <person name="Sun H."/>
            <person name="Mockaitis K."/>
            <person name="Kennelly P.J."/>
            <person name="Reed D."/>
            <person name="Tonks N.K."/>
        </authorList>
    </citation>
    <scope>NUCLEOTIDE SEQUENCE [GENOMIC DNA]</scope>
    <scope>PROTEIN SEQUENCE OF 25-37</scope>
    <source>
        <strain>UTEX 584 / SAG 1453-5</strain>
    </source>
</reference>
<reference key="2">
    <citation type="journal article" date="1989" name="J. Bacteriol.">
        <title>Nostoc commune UTEX 584 gene expressing indole phosphate hydrolase activity in Escherichia coli.</title>
        <authorList>
            <person name="Xie W.-Q."/>
            <person name="Whitton B.A."/>
            <person name="Simon J.W."/>
            <person name="Jaeger K."/>
            <person name="Reed D."/>
            <person name="Potts M."/>
        </authorList>
    </citation>
    <scope>NUCLEOTIDE SEQUENCE [GENOMIC DNA]</scope>
    <source>
        <strain>UTEX 584 / SAG 1453-5</strain>
    </source>
</reference>
<sequence>MKTHHANLALALMLGLSSSATAVAADAPQAVATKAAAPNVKPVAADAHGVIPDGAPGMCARSPACRATAIPADAFVRTADLGRLTDADRDALAALGVKLDIDLRTADEEAQSPDLLARDDRFDYQRISLMGTEKMDLQKMMTSFPDSLGEAYVQWLGHSQPQFKQVFQRIAAQQDGAVLFHCTAGKDRTGIIAGLLLDLAGVPKAEIVHNYAISAHYLEGQPKDSDERADHGAGQAEPGDRPQDGGHGRYRAGQHGAVLAALHSQYGGAEGYLKSIGVSEQEIQQLKVRLGQAG</sequence>
<feature type="signal peptide" evidence="3">
    <location>
        <begin position="1"/>
        <end position="24"/>
    </location>
</feature>
<feature type="chain" id="PRO_0000025473" description="Tyrosine-protein phosphatase">
    <location>
        <begin position="25"/>
        <end position="294"/>
    </location>
</feature>
<feature type="region of interest" description="Disordered" evidence="2">
    <location>
        <begin position="221"/>
        <end position="252"/>
    </location>
</feature>
<feature type="compositionally biased region" description="Basic and acidic residues" evidence="2">
    <location>
        <begin position="221"/>
        <end position="231"/>
    </location>
</feature>
<feature type="compositionally biased region" description="Basic and acidic residues" evidence="2">
    <location>
        <begin position="238"/>
        <end position="247"/>
    </location>
</feature>
<feature type="active site" description="Phosphocysteine intermediate" evidence="1">
    <location>
        <position position="182"/>
    </location>
</feature>
<organism>
    <name type="scientific">Nostoc commune</name>
    <dbReference type="NCBI Taxonomy" id="1178"/>
    <lineage>
        <taxon>Bacteria</taxon>
        <taxon>Bacillati</taxon>
        <taxon>Cyanobacteriota</taxon>
        <taxon>Cyanophyceae</taxon>
        <taxon>Nostocales</taxon>
        <taxon>Nostocaceae</taxon>
        <taxon>Nostoc</taxon>
    </lineage>
</organism>
<protein>
    <recommendedName>
        <fullName>Tyrosine-protein phosphatase</fullName>
        <ecNumber>3.1.3.48</ecNumber>
    </recommendedName>
</protein>
<name>IPHP_NOSCO</name>
<comment type="catalytic activity">
    <reaction evidence="1">
        <text>O-phospho-L-tyrosyl-[protein] + H2O = L-tyrosyl-[protein] + phosphate</text>
        <dbReference type="Rhea" id="RHEA:10684"/>
        <dbReference type="Rhea" id="RHEA-COMP:10136"/>
        <dbReference type="Rhea" id="RHEA-COMP:20101"/>
        <dbReference type="ChEBI" id="CHEBI:15377"/>
        <dbReference type="ChEBI" id="CHEBI:43474"/>
        <dbReference type="ChEBI" id="CHEBI:46858"/>
        <dbReference type="ChEBI" id="CHEBI:61978"/>
        <dbReference type="EC" id="3.1.3.48"/>
    </reaction>
</comment>
<comment type="subunit">
    <text>Monomer.</text>
</comment>
<comment type="similarity">
    <text evidence="4">Belongs to the protein-tyrosine phosphatase family.</text>
</comment>